<dbReference type="EC" id="2.7.7.65" evidence="2"/>
<dbReference type="EMBL" id="CP000034">
    <property type="protein sequence ID" value="ABB61215.1"/>
    <property type="status" value="ALT_INIT"/>
    <property type="molecule type" value="Genomic_DNA"/>
</dbReference>
<dbReference type="RefSeq" id="WP_000431441.1">
    <property type="nucleotide sequence ID" value="NC_007606.1"/>
</dbReference>
<dbReference type="RefSeq" id="YP_402706.1">
    <property type="nucleotide sequence ID" value="NC_007606.1"/>
</dbReference>
<dbReference type="SMR" id="Q32HJ0"/>
<dbReference type="STRING" id="300267.SDY_1050"/>
<dbReference type="EnsemblBacteria" id="ABB61215">
    <property type="protein sequence ID" value="ABB61215"/>
    <property type="gene ID" value="SDY_1050"/>
</dbReference>
<dbReference type="KEGG" id="sdy:SDY_1050"/>
<dbReference type="PATRIC" id="fig|300267.13.peg.1227"/>
<dbReference type="HOGENOM" id="CLU_000445_11_23_6"/>
<dbReference type="UniPathway" id="UPA00599"/>
<dbReference type="UniPathway" id="UPA00694"/>
<dbReference type="Proteomes" id="UP000002716">
    <property type="component" value="Chromosome"/>
</dbReference>
<dbReference type="GO" id="GO:0005886">
    <property type="term" value="C:plasma membrane"/>
    <property type="evidence" value="ECO:0007669"/>
    <property type="project" value="UniProtKB-SubCell"/>
</dbReference>
<dbReference type="GO" id="GO:0052621">
    <property type="term" value="F:diguanylate cyclase activity"/>
    <property type="evidence" value="ECO:0007669"/>
    <property type="project" value="UniProtKB-EC"/>
</dbReference>
<dbReference type="GO" id="GO:0005525">
    <property type="term" value="F:GTP binding"/>
    <property type="evidence" value="ECO:0007669"/>
    <property type="project" value="UniProtKB-KW"/>
</dbReference>
<dbReference type="GO" id="GO:0046872">
    <property type="term" value="F:metal ion binding"/>
    <property type="evidence" value="ECO:0007669"/>
    <property type="project" value="UniProtKB-KW"/>
</dbReference>
<dbReference type="GO" id="GO:0043709">
    <property type="term" value="P:cell adhesion involved in single-species biofilm formation"/>
    <property type="evidence" value="ECO:0007669"/>
    <property type="project" value="TreeGrafter"/>
</dbReference>
<dbReference type="GO" id="GO:0030244">
    <property type="term" value="P:cellulose biosynthetic process"/>
    <property type="evidence" value="ECO:0007669"/>
    <property type="project" value="UniProtKB-KW"/>
</dbReference>
<dbReference type="GO" id="GO:1902201">
    <property type="term" value="P:negative regulation of bacterial-type flagellum-dependent cell motility"/>
    <property type="evidence" value="ECO:0007669"/>
    <property type="project" value="TreeGrafter"/>
</dbReference>
<dbReference type="CDD" id="cd01949">
    <property type="entry name" value="GGDEF"/>
    <property type="match status" value="1"/>
</dbReference>
<dbReference type="FunFam" id="3.30.70.270:FF:000001">
    <property type="entry name" value="Diguanylate cyclase domain protein"/>
    <property type="match status" value="1"/>
</dbReference>
<dbReference type="Gene3D" id="3.30.70.270">
    <property type="match status" value="1"/>
</dbReference>
<dbReference type="InterPro" id="IPR033416">
    <property type="entry name" value="CHASE7"/>
</dbReference>
<dbReference type="InterPro" id="IPR050469">
    <property type="entry name" value="Diguanylate_Cyclase"/>
</dbReference>
<dbReference type="InterPro" id="IPR000160">
    <property type="entry name" value="GGDEF_dom"/>
</dbReference>
<dbReference type="InterPro" id="IPR029787">
    <property type="entry name" value="Nucleotide_cyclase"/>
</dbReference>
<dbReference type="InterPro" id="IPR043128">
    <property type="entry name" value="Rev_trsase/Diguanyl_cyclase"/>
</dbReference>
<dbReference type="NCBIfam" id="TIGR00254">
    <property type="entry name" value="GGDEF"/>
    <property type="match status" value="1"/>
</dbReference>
<dbReference type="NCBIfam" id="NF011955">
    <property type="entry name" value="PRK15426.1"/>
    <property type="match status" value="1"/>
</dbReference>
<dbReference type="PANTHER" id="PTHR45138:SF16">
    <property type="entry name" value="DIGUANYLATE CYCLASE DGCQ-RELATED"/>
    <property type="match status" value="1"/>
</dbReference>
<dbReference type="PANTHER" id="PTHR45138">
    <property type="entry name" value="REGULATORY COMPONENTS OF SENSORY TRANSDUCTION SYSTEM"/>
    <property type="match status" value="1"/>
</dbReference>
<dbReference type="Pfam" id="PF17151">
    <property type="entry name" value="CHASE7"/>
    <property type="match status" value="1"/>
</dbReference>
<dbReference type="Pfam" id="PF00990">
    <property type="entry name" value="GGDEF"/>
    <property type="match status" value="1"/>
</dbReference>
<dbReference type="SMART" id="SM00267">
    <property type="entry name" value="GGDEF"/>
    <property type="match status" value="1"/>
</dbReference>
<dbReference type="SUPFAM" id="SSF55073">
    <property type="entry name" value="Nucleotide cyclase"/>
    <property type="match status" value="1"/>
</dbReference>
<dbReference type="PROSITE" id="PS50887">
    <property type="entry name" value="GGDEF"/>
    <property type="match status" value="1"/>
</dbReference>
<evidence type="ECO:0000250" key="1">
    <source>
        <dbReference type="UniProtKB" id="P31129"/>
    </source>
</evidence>
<evidence type="ECO:0000250" key="2">
    <source>
        <dbReference type="UniProtKB" id="P76330"/>
    </source>
</evidence>
<evidence type="ECO:0000255" key="3"/>
<evidence type="ECO:0000255" key="4">
    <source>
        <dbReference type="PROSITE-ProRule" id="PRU00095"/>
    </source>
</evidence>
<evidence type="ECO:0000305" key="5"/>
<comment type="function">
    <text evidence="1 2">Catalyzes the synthesis of cyclic-di-GMP (c-di-GMP) via the condensation of 2 GTP molecules (By similarity). Cyclic-di-GMP is a second messenger which controls cell surface-associated traits in bacteria. Involved in the regulation of cellulose production (By similarity).</text>
</comment>
<comment type="catalytic activity">
    <reaction evidence="1">
        <text>2 GTP = 3',3'-c-di-GMP + 2 diphosphate</text>
        <dbReference type="Rhea" id="RHEA:24898"/>
        <dbReference type="ChEBI" id="CHEBI:33019"/>
        <dbReference type="ChEBI" id="CHEBI:37565"/>
        <dbReference type="ChEBI" id="CHEBI:58805"/>
        <dbReference type="EC" id="2.7.7.65"/>
    </reaction>
</comment>
<comment type="cofactor">
    <cofactor evidence="1">
        <name>Mg(2+)</name>
        <dbReference type="ChEBI" id="CHEBI:18420"/>
    </cofactor>
    <text evidence="1">Binds 1 Mg(2+) ion per monomer.</text>
</comment>
<comment type="pathway">
    <text evidence="2">Glycan metabolism; bacterial cellulose biosynthesis.</text>
</comment>
<comment type="pathway">
    <text evidence="2">Purine metabolism; 3',5'-cyclic di-GMP biosynthesis.</text>
</comment>
<comment type="subunit">
    <text evidence="1">Homodimer.</text>
</comment>
<comment type="subcellular location">
    <subcellularLocation>
        <location evidence="5">Cell inner membrane</location>
        <topology evidence="3">Multi-pass membrane protein</topology>
    </subcellularLocation>
</comment>
<comment type="sequence caution" evidence="5">
    <conflict type="erroneous initiation">
        <sequence resource="EMBL-CDS" id="ABB61215"/>
    </conflict>
</comment>
<feature type="chain" id="PRO_0000248036" description="Probable diguanylate cyclase DgcQ">
    <location>
        <begin position="1"/>
        <end position="564"/>
    </location>
</feature>
<feature type="transmembrane region" description="Helical" evidence="3">
    <location>
        <begin position="20"/>
        <end position="40"/>
    </location>
</feature>
<feature type="transmembrane region" description="Helical" evidence="3">
    <location>
        <begin position="360"/>
        <end position="380"/>
    </location>
</feature>
<feature type="domain" description="GGDEF" evidence="4">
    <location>
        <begin position="428"/>
        <end position="563"/>
    </location>
</feature>
<feature type="active site" description="Proton acceptor" evidence="3">
    <location>
        <position position="479"/>
    </location>
</feature>
<feature type="binding site" evidence="1">
    <location>
        <position position="436"/>
    </location>
    <ligand>
        <name>Mg(2+)</name>
        <dbReference type="ChEBI" id="CHEBI:18420"/>
    </ligand>
</feature>
<feature type="binding site" evidence="1">
    <location>
        <position position="444"/>
    </location>
    <ligand>
        <name>substrate</name>
    </ligand>
</feature>
<feature type="binding site" evidence="1">
    <location>
        <position position="449"/>
    </location>
    <ligand>
        <name>substrate</name>
    </ligand>
</feature>
<feature type="binding site" evidence="1">
    <location>
        <position position="453"/>
    </location>
    <ligand>
        <name>substrate</name>
    </ligand>
</feature>
<feature type="binding site" evidence="1">
    <location>
        <position position="479"/>
    </location>
    <ligand>
        <name>Mg(2+)</name>
        <dbReference type="ChEBI" id="CHEBI:18420"/>
    </ligand>
</feature>
<feature type="site" description="Transition state stabilizer" evidence="3">
    <location>
        <position position="441"/>
    </location>
</feature>
<sequence length="564" mass="64375">MQHETKMENQSWLKKLARRLGPGHIVNLCFIVVLLFSTLLTWREVVVLEDAYISSQRNHLENVANALDKHLQYNVDKLIFLRNGMREALIAPLDFTSLRDAVTEFEQHRDEHAWQIELNRRRTLPVNGVSDALVSEGNLLSRENESLDNEITAALEVGYLLRLAHNSSSMVEQAMYVSRAGFYVSTQPTLFTRNVPTRYYGYVTQPWFIGHSQRENRHRAVRWFTSQPEHASNTEPQVTVSVPVDSNNYWYGVLGMSIPVRTMQQFLRNAIDKNLDGEYQLYDSKLRFLTSSNPDHPTGNIFDPRELAFLAQAMEHDTRGGIRMDSRYVSWERLDHFDGVLVRVHTLSEGVRGDFGSISIALTLLWALFTTMLLISWYVIRRMVSNMYVLQSSLQWQAWHDTLTRLYNRGALFEKARPLAKLCQTHQHPFSVIQVDLDHFKAINDRFGHQAGDRVLSHAAGLISSSLRAQDVAGRVGGEEFCVILPGASLTEAAEVAERIRLKLNEKEMLIAKSTTIRISASLGVSSSEETGDYDFEQLQSLADRRLYLAKQAGRNRVFASDNT</sequence>
<protein>
    <recommendedName>
        <fullName evidence="2">Probable diguanylate cyclase DgcQ</fullName>
        <shortName evidence="2">DGC</shortName>
        <ecNumber evidence="2">2.7.7.65</ecNumber>
    </recommendedName>
    <alternativeName>
        <fullName evidence="2">Cellulose synthesis regulatory protein</fullName>
    </alternativeName>
</protein>
<proteinExistence type="inferred from homology"/>
<keyword id="KW-0997">Cell inner membrane</keyword>
<keyword id="KW-1003">Cell membrane</keyword>
<keyword id="KW-0135">Cellulose biosynthesis</keyword>
<keyword id="KW-0342">GTP-binding</keyword>
<keyword id="KW-0460">Magnesium</keyword>
<keyword id="KW-0472">Membrane</keyword>
<keyword id="KW-0479">Metal-binding</keyword>
<keyword id="KW-0547">Nucleotide-binding</keyword>
<keyword id="KW-1185">Reference proteome</keyword>
<keyword id="KW-0808">Transferase</keyword>
<keyword id="KW-0812">Transmembrane</keyword>
<keyword id="KW-1133">Transmembrane helix</keyword>
<reference key="1">
    <citation type="journal article" date="2005" name="Nucleic Acids Res.">
        <title>Genome dynamics and diversity of Shigella species, the etiologic agents of bacillary dysentery.</title>
        <authorList>
            <person name="Yang F."/>
            <person name="Yang J."/>
            <person name="Zhang X."/>
            <person name="Chen L."/>
            <person name="Jiang Y."/>
            <person name="Yan Y."/>
            <person name="Tang X."/>
            <person name="Wang J."/>
            <person name="Xiong Z."/>
            <person name="Dong J."/>
            <person name="Xue Y."/>
            <person name="Zhu Y."/>
            <person name="Xu X."/>
            <person name="Sun L."/>
            <person name="Chen S."/>
            <person name="Nie H."/>
            <person name="Peng J."/>
            <person name="Xu J."/>
            <person name="Wang Y."/>
            <person name="Yuan Z."/>
            <person name="Wen Y."/>
            <person name="Yao Z."/>
            <person name="Shen Y."/>
            <person name="Qiang B."/>
            <person name="Hou Y."/>
            <person name="Yu J."/>
            <person name="Jin Q."/>
        </authorList>
    </citation>
    <scope>NUCLEOTIDE SEQUENCE [LARGE SCALE GENOMIC DNA]</scope>
    <source>
        <strain>Sd197</strain>
    </source>
</reference>
<name>DGCQ_SHIDS</name>
<organism>
    <name type="scientific">Shigella dysenteriae serotype 1 (strain Sd197)</name>
    <dbReference type="NCBI Taxonomy" id="300267"/>
    <lineage>
        <taxon>Bacteria</taxon>
        <taxon>Pseudomonadati</taxon>
        <taxon>Pseudomonadota</taxon>
        <taxon>Gammaproteobacteria</taxon>
        <taxon>Enterobacterales</taxon>
        <taxon>Enterobacteriaceae</taxon>
        <taxon>Shigella</taxon>
    </lineage>
</organism>
<accession>Q32HJ0</accession>
<gene>
    <name evidence="2" type="primary">dgcQ</name>
    <name type="synonym">yedQ</name>
    <name type="ordered locus">SDY_1050</name>
</gene>